<organismHost>
    <name type="scientific">Callospermophilus lateralis</name>
    <name type="common">Golden-mantled ground squirrel</name>
    <name type="synonym">Spermophilus lateralis</name>
    <dbReference type="NCBI Taxonomy" id="76772"/>
</organismHost>
<organismHost>
    <name type="scientific">Dermacentor andersoni</name>
    <name type="common">Rocky mountain wood tick</name>
    <dbReference type="NCBI Taxonomy" id="34620"/>
</organismHost>
<organismHost>
    <name type="scientific">Erethizon dorsatum</name>
    <name type="common">North American porcupine</name>
    <name type="synonym">Hystrix dorsata</name>
    <dbReference type="NCBI Taxonomy" id="34844"/>
</organismHost>
<organismHost>
    <name type="scientific">Homo sapiens</name>
    <name type="common">Human</name>
    <dbReference type="NCBI Taxonomy" id="9606"/>
</organismHost>
<organismHost>
    <name type="scientific">Neotoma cinerea</name>
    <name type="common">Bushy-tailed woodrat</name>
    <name type="synonym">Mus cinereus</name>
    <dbReference type="NCBI Taxonomy" id="105147"/>
</organismHost>
<organismHost>
    <name type="scientific">Peromyscus maniculatus</name>
    <name type="common">North American deer mouse</name>
    <dbReference type="NCBI Taxonomy" id="10042"/>
</organismHost>
<dbReference type="EMBL" id="AF139759">
    <property type="protein sequence ID" value="AAG00068.1"/>
    <property type="molecule type" value="Genomic_RNA"/>
</dbReference>
<dbReference type="RefSeq" id="NP_690893.1">
    <property type="nucleotide sequence ID" value="NC_004183.1"/>
</dbReference>
<dbReference type="GeneID" id="993311"/>
<dbReference type="KEGG" id="vg:993311"/>
<dbReference type="Proteomes" id="UP000001675">
    <property type="component" value="Genome"/>
</dbReference>
<dbReference type="GO" id="GO:0033644">
    <property type="term" value="C:host cell membrane"/>
    <property type="evidence" value="ECO:0007669"/>
    <property type="project" value="UniProtKB-SubCell"/>
</dbReference>
<dbReference type="GO" id="GO:0016020">
    <property type="term" value="C:membrane"/>
    <property type="evidence" value="ECO:0007669"/>
    <property type="project" value="UniProtKB-KW"/>
</dbReference>
<dbReference type="InterPro" id="IPR045917">
    <property type="entry name" value="VP3-like"/>
</dbReference>
<dbReference type="Pfam" id="PF18965">
    <property type="entry name" value="VP3-like"/>
    <property type="match status" value="1"/>
</dbReference>
<reference key="1">
    <citation type="journal article" date="2000" name="Biochem. Biophys. Res. Commun.">
        <title>Sequence determination and analysis of the full-length genome of colorado tick fever virus, the type species of genus Coltivirus (Family Reoviridae).</title>
        <authorList>
            <person name="Attoui H."/>
            <person name="Billoir F."/>
            <person name="Biagini P."/>
            <person name="Cantaloube J.F."/>
            <person name="de Chesse R."/>
            <person name="de Micco P."/>
            <person name="de Lamballerie X."/>
        </authorList>
    </citation>
    <scope>NUCLEOTIDE SEQUENCE [GENOMIC RNA]</scope>
</reference>
<comment type="subcellular location">
    <subcellularLocation>
        <location evidence="2">Host membrane</location>
        <topology evidence="2">Single-pass membrane protein</topology>
    </subcellularLocation>
</comment>
<accession>Q9ENL3</accession>
<feature type="chain" id="PRO_0000403191" description="Uncharacterized protein VP3">
    <location>
        <begin position="1"/>
        <end position="1182"/>
    </location>
</feature>
<feature type="transmembrane region" description="Helical" evidence="1">
    <location>
        <begin position="618"/>
        <end position="638"/>
    </location>
</feature>
<keyword id="KW-1043">Host membrane</keyword>
<keyword id="KW-0472">Membrane</keyword>
<keyword id="KW-1185">Reference proteome</keyword>
<keyword id="KW-0812">Transmembrane</keyword>
<keyword id="KW-1133">Transmembrane helix</keyword>
<evidence type="ECO:0000255" key="1"/>
<evidence type="ECO:0000305" key="2"/>
<name>VP3_CTFVL</name>
<protein>
    <recommendedName>
        <fullName>Uncharacterized protein VP3</fullName>
    </recommendedName>
</protein>
<proteinExistence type="predicted"/>
<organism>
    <name type="scientific">Colorado tick fever virus (strain USA/Florio N-7180)</name>
    <name type="common">CTFV</name>
    <dbReference type="NCBI Taxonomy" id="648168"/>
    <lineage>
        <taxon>Viruses</taxon>
        <taxon>Riboviria</taxon>
        <taxon>Orthornavirae</taxon>
        <taxon>Duplornaviricota</taxon>
        <taxon>Resentoviricetes</taxon>
        <taxon>Reovirales</taxon>
        <taxon>Spinareoviridae</taxon>
        <taxon>Coltivirus</taxon>
        <taxon>Colorado tick fever coltivirus</taxon>
    </lineage>
</organism>
<sequence>MAQLLFRKTTQDFRDCFGLKHEILASIYNEKSTFSSENGSIQILEEAEVNALGELVRDGTVAISFGPGIYSRMFSHLRDDSDYRSALTDCVAHGWKQTRDARDVREWQRSAAIMCAERYMYKVRQAYKRVVENLDHMYAWHYLTEGPSEHVFILPAMYESVRHETTSEAYGMQCGGIIGGNVSLMLPRDEQYTTLFKAWLMSLAKMSLSELREPHWNGVRVQLSRDHRILYYGDLLPSDGDITYLVNKLEYHTIWFPEGDFETMMGAMLRDSFPAGCHAHLNIPVPHYFVFDTDDDLILRCWKGVRDTWIKLRLGYEEGGVNDSRMSEALIVNRDLPADLSESLFCCCLARGVSRDQVRTLKDVRNVAQAQIRHVVSGQGVWWEHMVRGQPLACSIRPGKVVLVVDYEDGPLHVSIRVRLLNVHYARELGMKASDVVVRIPTSNRPRWVETKEYERSLRFYEFRPGPITTEFHHVFAFYCYWGCGRVEKRRHLYQIREVRRGNLYSRSRFLRRIAEDGEKVKVQGRTHVTATRAVQHEKCNPNEDIIYSREFARELALTGKIKEAGALAVIYTCMQTLGVDIDPPAGWVREGRPKQRTAKLCHLLTRILTAFFSYRGGSSSLVCSVMVVIFSIILYYLRLKHVDQEVRYDELTLIWYGDGGVELQRILREVSMTRFVAVAGDPATPEYIAQAKLWANKKSNIVVFNYARPYERGPVFENLIRDTVSLREAAEVFILRTDDSWSQYGNTVVAMLGEGDFCDLVHFGASCDPMEHYFVHISQPPGTNPGYEPANQEEPFEEWLYETQAMERVIPTTWESEIVDARGMLVSILTFHFRFAGWFELDVPGDDIGRGLQLMGSINKVVHVSCFVQNGRRYFRLSVDLDVDRVLRNMRHEGDALMAAELFVTDAVLVCEGLVVGEMHRLQRTYRSVNAMVYHQGMTNFIVYEWMRRVLLTNLLDEMLVFDIGGRNGELSGWVVQDVKVHYFCVDPAGEEAIPKGQRVRLPGGRAIWDIAETVEQNVARYLEVVGKPQTPAEGIILIFSNSIVAAYEAAGRNNRNQVANLYQQLQAWGGRVFIRDQLVPTRANPGDYWIQAAFPGNVYPPGLCEDFNIDPDAGILPLRYPDTGQGATDVVLANGRLGHLTSSWFQSLYCGAARGFILNGFGRLIWPIYCRHVVVLATRP</sequence>